<organism>
    <name type="scientific">Ananas macrodontes</name>
    <name type="common">False pineapple</name>
    <name type="synonym">Pseudananas macrodontes</name>
    <dbReference type="NCBI Taxonomy" id="203992"/>
    <lineage>
        <taxon>Eukaryota</taxon>
        <taxon>Viridiplantae</taxon>
        <taxon>Streptophyta</taxon>
        <taxon>Embryophyta</taxon>
        <taxon>Tracheophyta</taxon>
        <taxon>Spermatophyta</taxon>
        <taxon>Magnoliopsida</taxon>
        <taxon>Liliopsida</taxon>
        <taxon>Poales</taxon>
        <taxon>Bromeliaceae</taxon>
        <taxon>Bromelioideae</taxon>
        <taxon>Ananas</taxon>
    </lineage>
</organism>
<proteinExistence type="evidence at protein level"/>
<protein>
    <recommendedName>
        <fullName>Macrodontain-2</fullName>
        <ecNumber evidence="1">3.4.22.-</ecNumber>
    </recommendedName>
    <alternativeName>
        <fullName>Macrodontain II</fullName>
    </alternativeName>
</protein>
<feature type="chain" id="PRO_0000050562" description="Macrodontain-2">
    <location>
        <begin position="1"/>
        <end position="27" status="greater than"/>
    </location>
</feature>
<feature type="non-terminal residue">
    <location>
        <position position="27"/>
    </location>
</feature>
<sequence length="27" mass="3037">AVPQSIDWRDYGAVNEVKNQNPCGSCW</sequence>
<evidence type="ECO:0000250" key="1">
    <source>
        <dbReference type="UniProtKB" id="P80884"/>
    </source>
</evidence>
<evidence type="ECO:0000255" key="2">
    <source>
        <dbReference type="PROSITE-ProRule" id="PRU10088"/>
    </source>
</evidence>
<evidence type="ECO:0000255" key="3">
    <source>
        <dbReference type="PROSITE-ProRule" id="PRU10089"/>
    </source>
</evidence>
<evidence type="ECO:0000255" key="4">
    <source>
        <dbReference type="PROSITE-ProRule" id="PRU10090"/>
    </source>
</evidence>
<evidence type="ECO:0000269" key="5">
    <source>
    </source>
</evidence>
<reference key="1">
    <citation type="journal article" date="2001" name="Biol. Chem.">
        <title>Comparison of two cysteine endopeptidases from Pseudananas macrodontes (Morr.) Harms (Bromeliaceae).</title>
        <authorList>
            <person name="Lopez L.M.I."/>
            <person name="Sequeiros C."/>
            <person name="Trejo S.A."/>
            <person name="Pardo M.F."/>
            <person name="Caffini N.O."/>
            <person name="Natalucci C.L."/>
        </authorList>
    </citation>
    <scope>PROTEIN SEQUENCE</scope>
    <scope>FUNCTION</scope>
    <scope>ACTIVITY REGULATION</scope>
    <scope>BIOPHYSICOCHEMICAL PROPERTIES</scope>
    <scope>SUBUNIT</scope>
    <scope>MASS SPECTROMETRY</scope>
    <source>
        <tissue>Fruit</tissue>
    </source>
</reference>
<keyword id="KW-0903">Direct protein sequencing</keyword>
<keyword id="KW-0378">Hydrolase</keyword>
<keyword id="KW-0645">Protease</keyword>
<keyword id="KW-0788">Thiol protease</keyword>
<name>MDO2_ANAMC</name>
<dbReference type="EC" id="3.4.22.-" evidence="1"/>
<dbReference type="MEROPS" id="C01.161"/>
<dbReference type="GO" id="GO:0008234">
    <property type="term" value="F:cysteine-type peptidase activity"/>
    <property type="evidence" value="ECO:0007669"/>
    <property type="project" value="UniProtKB-KW"/>
</dbReference>
<dbReference type="GO" id="GO:0006508">
    <property type="term" value="P:proteolysis"/>
    <property type="evidence" value="ECO:0007669"/>
    <property type="project" value="UniProtKB-KW"/>
</dbReference>
<dbReference type="Gene3D" id="3.90.70.10">
    <property type="entry name" value="Cysteine proteinases"/>
    <property type="match status" value="1"/>
</dbReference>
<dbReference type="InterPro" id="IPR038765">
    <property type="entry name" value="Papain-like_cys_pep_sf"/>
</dbReference>
<dbReference type="InterPro" id="IPR000668">
    <property type="entry name" value="Peptidase_C1A_C"/>
</dbReference>
<dbReference type="Pfam" id="PF00112">
    <property type="entry name" value="Peptidase_C1"/>
    <property type="match status" value="1"/>
</dbReference>
<dbReference type="SUPFAM" id="SSF54001">
    <property type="entry name" value="Cysteine proteinases"/>
    <property type="match status" value="1"/>
</dbReference>
<comment type="function">
    <text evidence="5">Cysteine protease that shows preferential cleavage as follows: Ala-|-Xaa &gt; Gln-|-Xaa &gt; Tyr-Xaa. Hydrolyzes the synthetic peptide substrate Bz-Phe-Val-Arg-pNA.</text>
</comment>
<comment type="activity regulation">
    <text evidence="5">Inhibited by the general cysteine protease inhibitor E64 (L-trans-epoxysuccinyl-leucylamide-(4-guanido)-butane).</text>
</comment>
<comment type="biophysicochemical properties">
    <kinetics>
        <KM evidence="5">8.9 uM for Bz-Phe-Val-Arg-pNA</KM>
    </kinetics>
    <phDependence>
        <text evidence="5">Optimum pH is 7.5-8.5.</text>
    </phDependence>
</comment>
<comment type="subunit">
    <text evidence="5">Monomer.</text>
</comment>
<comment type="mass spectrometry" mass="23703.0" method="MALDI" evidence="5"/>
<comment type="similarity">
    <text evidence="2 3 4">Belongs to the peptidase C1 family.</text>
</comment>
<accession>P83447</accession>